<reference key="1">
    <citation type="journal article" date="1991" name="J. Bacteriol.">
        <title>Comparative analysis of the replication regions of IncB, IncK, and IncZ plasmids.</title>
        <authorList>
            <person name="Praszkier J."/>
            <person name="Wei T."/>
            <person name="Siemering K."/>
            <person name="Pittard J."/>
        </authorList>
    </citation>
    <scope>NUCLEOTIDE SEQUENCE [GENOMIC DNA]</scope>
</reference>
<evidence type="ECO:0000256" key="1">
    <source>
        <dbReference type="SAM" id="MobiDB-lite"/>
    </source>
</evidence>
<proteinExistence type="predicted"/>
<organism>
    <name type="scientific">Escherichia coli</name>
    <dbReference type="NCBI Taxonomy" id="562"/>
    <lineage>
        <taxon>Bacteria</taxon>
        <taxon>Pseudomonadati</taxon>
        <taxon>Pseudomonadota</taxon>
        <taxon>Gammaproteobacteria</taxon>
        <taxon>Enterobacterales</taxon>
        <taxon>Enterobacteriaceae</taxon>
        <taxon>Escherichia</taxon>
    </lineage>
</organism>
<name>REP8_ECOLX</name>
<feature type="chain" id="PRO_0000068339" description="Replication initiation protein">
    <location>
        <begin position="1"/>
        <end position="343"/>
    </location>
</feature>
<feature type="region of interest" description="Disordered" evidence="1">
    <location>
        <begin position="42"/>
        <end position="61"/>
    </location>
</feature>
<accession>Q52346</accession>
<gene>
    <name type="primary">repA</name>
</gene>
<protein>
    <recommendedName>
        <fullName>Replication initiation protein</fullName>
    </recommendedName>
    <alternativeName>
        <fullName>Replication-associated protein</fullName>
    </alternativeName>
</protein>
<sequence>MAGLKNTSYNAVHWSQLAPEEQIRFWEDYEAGRATTFLVEPERKRTKRRRGEHSTKPKCENPSWYRPERYKALSGQLGHAYNRLVKKDPVTGEQSLRMHMSLHPFYVQKRTYAGRKYAFRPEKQRLLDTIWPVLVSFSDAVTHTVGMSVSRLAREISPKDSKGKVIPELEVTVSRLSRLLAEQVRFGVLGVSEETLWDRETRQRLPRYVWITPAGWQMLGVDMVKLHEQQQKRLRESEIRQQLIREGVLREDEDISVHAARKRWYLQRSQDALKHRRAKAAASKRARRLKKLPADQQIHEMAEYLRKRLPPDEAYFCSDDHLKRLAIRELRQLELTLAAPPPH</sequence>
<keyword id="KW-0235">DNA replication</keyword>
<keyword id="KW-0614">Plasmid</keyword>
<geneLocation type="plasmid">
    <name>IncK R387</name>
</geneLocation>
<dbReference type="EMBL" id="M93063">
    <property type="protein sequence ID" value="AAA98310.1"/>
    <property type="molecule type" value="Genomic_DNA"/>
</dbReference>
<dbReference type="PIR" id="B42382">
    <property type="entry name" value="B42382"/>
</dbReference>
<dbReference type="RefSeq" id="WP_000907881.1">
    <property type="nucleotide sequence ID" value="NZ_WSVP01000021.1"/>
</dbReference>
<dbReference type="RefSeq" id="YP_003864264.1">
    <property type="nucleotide sequence ID" value="NC_014477.1"/>
</dbReference>
<dbReference type="GO" id="GO:0006260">
    <property type="term" value="P:DNA replication"/>
    <property type="evidence" value="ECO:0007669"/>
    <property type="project" value="UniProtKB-KW"/>
</dbReference>
<dbReference type="GO" id="GO:0006276">
    <property type="term" value="P:plasmid maintenance"/>
    <property type="evidence" value="ECO:0007669"/>
    <property type="project" value="InterPro"/>
</dbReference>
<dbReference type="InterPro" id="IPR003446">
    <property type="entry name" value="Plasmid_replication_init_RepA"/>
</dbReference>
<dbReference type="NCBIfam" id="NF040977">
    <property type="entry name" value="RepA_IncFII_LM"/>
    <property type="match status" value="1"/>
</dbReference>